<sequence>MRGDRMSKAPRTAISPTREENYPEWYQQVIRAADLAENSPVRGCMVIKPWGYQLWENVQRALDDMFKATGHQNAYFPLFIPMSFLEKEAEHVEGFAKECAVVTHHRLEPDPDGGLRPAGKLEEPLIVRPTSETIIGATYAKWVQSYRDLPILINQWANVVRWEMRTRMFLRTAEFLWQEGHTVHATSEEAVEETEKMVEVYRDFAENWMAMPVIVGSKTPLERFPGAVETLSIEAMMQDRKALQAGTSHFLGQNFSKAQEIKFQSESGDIEFAWTTSWGVSTRLIGALIMTHSDDDGLVLPPRLAPTHVVIQPIYKDDSRAEVMEYVQSLRDELAAQTYANAPVRVTIDDRDIRGGEKKWYHVKRGVPIRLEVGPKDIAAGTVFCGIRNQPKSVGIDRAELVATIGEKLATLQQELFDAALKMREDNTVELTSEAEFRDFFADKGDTAITGGFAWCHYCDEDSLQPLLKELKVTIRCVPRSDNATEGTCFLTGKPAAQRAIFAKAY</sequence>
<organism>
    <name type="scientific">Rhodopirellula baltica (strain DSM 10527 / NCIMB 13988 / SH1)</name>
    <dbReference type="NCBI Taxonomy" id="243090"/>
    <lineage>
        <taxon>Bacteria</taxon>
        <taxon>Pseudomonadati</taxon>
        <taxon>Planctomycetota</taxon>
        <taxon>Planctomycetia</taxon>
        <taxon>Pirellulales</taxon>
        <taxon>Pirellulaceae</taxon>
        <taxon>Rhodopirellula</taxon>
    </lineage>
</organism>
<keyword id="KW-0030">Aminoacyl-tRNA synthetase</keyword>
<keyword id="KW-0067">ATP-binding</keyword>
<keyword id="KW-0963">Cytoplasm</keyword>
<keyword id="KW-0436">Ligase</keyword>
<keyword id="KW-0547">Nucleotide-binding</keyword>
<keyword id="KW-0648">Protein biosynthesis</keyword>
<keyword id="KW-1185">Reference proteome</keyword>
<feature type="chain" id="PRO_0000249148" description="Proline--tRNA ligase">
    <location>
        <begin position="1"/>
        <end position="506"/>
    </location>
</feature>
<proteinExistence type="inferred from homology"/>
<comment type="function">
    <text evidence="1">Catalyzes the attachment of proline to tRNA(Pro) in a two-step reaction: proline is first activated by ATP to form Pro-AMP and then transferred to the acceptor end of tRNA(Pro).</text>
</comment>
<comment type="catalytic activity">
    <reaction evidence="1">
        <text>tRNA(Pro) + L-proline + ATP = L-prolyl-tRNA(Pro) + AMP + diphosphate</text>
        <dbReference type="Rhea" id="RHEA:14305"/>
        <dbReference type="Rhea" id="RHEA-COMP:9700"/>
        <dbReference type="Rhea" id="RHEA-COMP:9702"/>
        <dbReference type="ChEBI" id="CHEBI:30616"/>
        <dbReference type="ChEBI" id="CHEBI:33019"/>
        <dbReference type="ChEBI" id="CHEBI:60039"/>
        <dbReference type="ChEBI" id="CHEBI:78442"/>
        <dbReference type="ChEBI" id="CHEBI:78532"/>
        <dbReference type="ChEBI" id="CHEBI:456215"/>
        <dbReference type="EC" id="6.1.1.15"/>
    </reaction>
</comment>
<comment type="subunit">
    <text evidence="1">Homodimer.</text>
</comment>
<comment type="subcellular location">
    <subcellularLocation>
        <location evidence="1">Cytoplasm</location>
    </subcellularLocation>
</comment>
<comment type="domain">
    <text evidence="1">Consists of three domains: the N-terminal catalytic domain, the anticodon-binding domain and the C-terminal extension.</text>
</comment>
<comment type="similarity">
    <text evidence="1">Belongs to the class-II aminoacyl-tRNA synthetase family. ProS type 3 subfamily.</text>
</comment>
<reference key="1">
    <citation type="journal article" date="2003" name="Proc. Natl. Acad. Sci. U.S.A.">
        <title>Complete genome sequence of the marine planctomycete Pirellula sp. strain 1.</title>
        <authorList>
            <person name="Gloeckner F.O."/>
            <person name="Kube M."/>
            <person name="Bauer M."/>
            <person name="Teeling H."/>
            <person name="Lombardot T."/>
            <person name="Ludwig W."/>
            <person name="Gade D."/>
            <person name="Beck A."/>
            <person name="Borzym K."/>
            <person name="Heitmann K."/>
            <person name="Rabus R."/>
            <person name="Schlesner H."/>
            <person name="Amann R."/>
            <person name="Reinhardt R."/>
        </authorList>
    </citation>
    <scope>NUCLEOTIDE SEQUENCE [LARGE SCALE GENOMIC DNA]</scope>
    <source>
        <strain>DSM 10527 / NCIMB 13988 / SH1</strain>
    </source>
</reference>
<accession>Q7UGJ7</accession>
<protein>
    <recommendedName>
        <fullName evidence="1">Proline--tRNA ligase</fullName>
        <ecNumber evidence="1">6.1.1.15</ecNumber>
    </recommendedName>
    <alternativeName>
        <fullName evidence="1">Prolyl-tRNA synthetase</fullName>
        <shortName evidence="1">ProRS</shortName>
    </alternativeName>
</protein>
<name>SYP_RHOBA</name>
<evidence type="ECO:0000255" key="1">
    <source>
        <dbReference type="HAMAP-Rule" id="MF_01571"/>
    </source>
</evidence>
<dbReference type="EC" id="6.1.1.15" evidence="1"/>
<dbReference type="EMBL" id="BX294141">
    <property type="protein sequence ID" value="CAD78332.1"/>
    <property type="molecule type" value="Genomic_DNA"/>
</dbReference>
<dbReference type="RefSeq" id="NP_866551.1">
    <property type="nucleotide sequence ID" value="NC_005027.1"/>
</dbReference>
<dbReference type="SMR" id="Q7UGJ7"/>
<dbReference type="STRING" id="243090.RB5178"/>
<dbReference type="EnsemblBacteria" id="CAD78332">
    <property type="protein sequence ID" value="CAD78332"/>
    <property type="gene ID" value="RB5178"/>
</dbReference>
<dbReference type="KEGG" id="rba:RB5178"/>
<dbReference type="PATRIC" id="fig|243090.15.peg.2479"/>
<dbReference type="eggNOG" id="COG0442">
    <property type="taxonomic scope" value="Bacteria"/>
</dbReference>
<dbReference type="HOGENOM" id="CLU_001882_4_2_0"/>
<dbReference type="InParanoid" id="Q7UGJ7"/>
<dbReference type="OrthoDB" id="9809052at2"/>
<dbReference type="Proteomes" id="UP000001025">
    <property type="component" value="Chromosome"/>
</dbReference>
<dbReference type="GO" id="GO:0017101">
    <property type="term" value="C:aminoacyl-tRNA synthetase multienzyme complex"/>
    <property type="evidence" value="ECO:0000318"/>
    <property type="project" value="GO_Central"/>
</dbReference>
<dbReference type="GO" id="GO:0005737">
    <property type="term" value="C:cytoplasm"/>
    <property type="evidence" value="ECO:0000318"/>
    <property type="project" value="GO_Central"/>
</dbReference>
<dbReference type="GO" id="GO:0005524">
    <property type="term" value="F:ATP binding"/>
    <property type="evidence" value="ECO:0007669"/>
    <property type="project" value="UniProtKB-UniRule"/>
</dbReference>
<dbReference type="GO" id="GO:0004827">
    <property type="term" value="F:proline-tRNA ligase activity"/>
    <property type="evidence" value="ECO:0000318"/>
    <property type="project" value="GO_Central"/>
</dbReference>
<dbReference type="GO" id="GO:0006433">
    <property type="term" value="P:prolyl-tRNA aminoacylation"/>
    <property type="evidence" value="ECO:0000318"/>
    <property type="project" value="GO_Central"/>
</dbReference>
<dbReference type="CDD" id="cd00778">
    <property type="entry name" value="ProRS_core_arch_euk"/>
    <property type="match status" value="1"/>
</dbReference>
<dbReference type="FunFam" id="3.30.930.10:FF:000023">
    <property type="entry name" value="Proline--tRNA ligase"/>
    <property type="match status" value="1"/>
</dbReference>
<dbReference type="Gene3D" id="3.40.50.800">
    <property type="entry name" value="Anticodon-binding domain"/>
    <property type="match status" value="1"/>
</dbReference>
<dbReference type="Gene3D" id="3.30.930.10">
    <property type="entry name" value="Bira Bifunctional Protein, Domain 2"/>
    <property type="match status" value="1"/>
</dbReference>
<dbReference type="Gene3D" id="3.30.110.30">
    <property type="entry name" value="C-terminal domain of ProRS"/>
    <property type="match status" value="1"/>
</dbReference>
<dbReference type="HAMAP" id="MF_01571">
    <property type="entry name" value="Pro_tRNA_synth_type3"/>
    <property type="match status" value="1"/>
</dbReference>
<dbReference type="InterPro" id="IPR002314">
    <property type="entry name" value="aa-tRNA-synt_IIb"/>
</dbReference>
<dbReference type="InterPro" id="IPR006195">
    <property type="entry name" value="aa-tRNA-synth_II"/>
</dbReference>
<dbReference type="InterPro" id="IPR045864">
    <property type="entry name" value="aa-tRNA-synth_II/BPL/LPL"/>
</dbReference>
<dbReference type="InterPro" id="IPR004154">
    <property type="entry name" value="Anticodon-bd"/>
</dbReference>
<dbReference type="InterPro" id="IPR036621">
    <property type="entry name" value="Anticodon-bd_dom_sf"/>
</dbReference>
<dbReference type="InterPro" id="IPR004499">
    <property type="entry name" value="Pro-tRNA-ligase_IIa_arc-type"/>
</dbReference>
<dbReference type="InterPro" id="IPR016061">
    <property type="entry name" value="Pro-tRNA_ligase_II_C"/>
</dbReference>
<dbReference type="InterPro" id="IPR017449">
    <property type="entry name" value="Pro-tRNA_synth_II"/>
</dbReference>
<dbReference type="InterPro" id="IPR033721">
    <property type="entry name" value="ProRS_core_arch_euk"/>
</dbReference>
<dbReference type="NCBIfam" id="TIGR00408">
    <property type="entry name" value="proS_fam_I"/>
    <property type="match status" value="1"/>
</dbReference>
<dbReference type="PANTHER" id="PTHR43382:SF2">
    <property type="entry name" value="BIFUNCTIONAL GLUTAMATE_PROLINE--TRNA LIGASE"/>
    <property type="match status" value="1"/>
</dbReference>
<dbReference type="PANTHER" id="PTHR43382">
    <property type="entry name" value="PROLYL-TRNA SYNTHETASE"/>
    <property type="match status" value="1"/>
</dbReference>
<dbReference type="Pfam" id="PF03129">
    <property type="entry name" value="HGTP_anticodon"/>
    <property type="match status" value="1"/>
</dbReference>
<dbReference type="Pfam" id="PF09180">
    <property type="entry name" value="ProRS-C_1"/>
    <property type="match status" value="1"/>
</dbReference>
<dbReference type="Pfam" id="PF00587">
    <property type="entry name" value="tRNA-synt_2b"/>
    <property type="match status" value="1"/>
</dbReference>
<dbReference type="SMART" id="SM00946">
    <property type="entry name" value="ProRS-C_1"/>
    <property type="match status" value="1"/>
</dbReference>
<dbReference type="SUPFAM" id="SSF64586">
    <property type="entry name" value="C-terminal domain of ProRS"/>
    <property type="match status" value="1"/>
</dbReference>
<dbReference type="SUPFAM" id="SSF52954">
    <property type="entry name" value="Class II aaRS ABD-related"/>
    <property type="match status" value="1"/>
</dbReference>
<dbReference type="SUPFAM" id="SSF55681">
    <property type="entry name" value="Class II aaRS and biotin synthetases"/>
    <property type="match status" value="1"/>
</dbReference>
<dbReference type="PROSITE" id="PS50862">
    <property type="entry name" value="AA_TRNA_LIGASE_II"/>
    <property type="match status" value="1"/>
</dbReference>
<gene>
    <name evidence="1" type="primary">proS</name>
    <name type="ordered locus">RB5178</name>
</gene>